<evidence type="ECO:0000255" key="1">
    <source>
        <dbReference type="PROSITE-ProRule" id="PRU00169"/>
    </source>
</evidence>
<evidence type="ECO:0000255" key="2">
    <source>
        <dbReference type="PROSITE-ProRule" id="PRU01091"/>
    </source>
</evidence>
<evidence type="ECO:0000269" key="3">
    <source>
    </source>
</evidence>
<evidence type="ECO:0000269" key="4">
    <source>
    </source>
</evidence>
<evidence type="ECO:0000269" key="5">
    <source>
    </source>
</evidence>
<evidence type="ECO:0000269" key="6">
    <source>
    </source>
</evidence>
<evidence type="ECO:0000269" key="7">
    <source>
    </source>
</evidence>
<evidence type="ECO:0000269" key="8">
    <source>
    </source>
</evidence>
<evidence type="ECO:0000269" key="9">
    <source>
    </source>
</evidence>
<evidence type="ECO:0000269" key="10">
    <source>
    </source>
</evidence>
<evidence type="ECO:0000269" key="11">
    <source>
    </source>
</evidence>
<evidence type="ECO:0000269" key="12">
    <source>
    </source>
</evidence>
<evidence type="ECO:0000305" key="13"/>
<evidence type="ECO:0000305" key="14">
    <source>
    </source>
</evidence>
<evidence type="ECO:0007829" key="15">
    <source>
        <dbReference type="PDB" id="4UHJ"/>
    </source>
</evidence>
<evidence type="ECO:0007829" key="16">
    <source>
        <dbReference type="PDB" id="4UHT"/>
    </source>
</evidence>
<name>CPXR_ECOLI</name>
<accession>P0AE88</accession>
<accession>P16244</accession>
<accession>P76777</accession>
<accession>Q2M8K9</accession>
<reference key="1">
    <citation type="journal article" date="1993" name="Gene">
        <title>The deduced amino-acid sequence of the cloned cpxR gene suggests the protein is the cognate regulator for the membrane sensor, CpxA, in a two-component signal transduction system of Escherichia coli.</title>
        <authorList>
            <person name="Dong J."/>
            <person name="Iuchi S."/>
            <person name="Kwan H.-S."/>
            <person name="Lu Z."/>
            <person name="Lin E."/>
        </authorList>
    </citation>
    <scope>NUCLEOTIDE SEQUENCE [GENOMIC DNA]</scope>
    <source>
        <strain>L547</strain>
    </source>
</reference>
<reference key="2">
    <citation type="journal article" date="1993" name="Nucleic Acids Res.">
        <title>Analysis of the Escherichia coli genome. III. DNA sequence of the region from 87.2 to 89.2 minutes.</title>
        <authorList>
            <person name="Plunkett G. III"/>
            <person name="Burland V."/>
            <person name="Daniels D.L."/>
            <person name="Blattner F.R."/>
        </authorList>
    </citation>
    <scope>NUCLEOTIDE SEQUENCE [LARGE SCALE GENOMIC DNA]</scope>
    <source>
        <strain>K12 / MG1655 / ATCC 47076</strain>
    </source>
</reference>
<reference key="3">
    <citation type="journal article" date="1997" name="Science">
        <title>The complete genome sequence of Escherichia coli K-12.</title>
        <authorList>
            <person name="Blattner F.R."/>
            <person name="Plunkett G. III"/>
            <person name="Bloch C.A."/>
            <person name="Perna N.T."/>
            <person name="Burland V."/>
            <person name="Riley M."/>
            <person name="Collado-Vides J."/>
            <person name="Glasner J.D."/>
            <person name="Rode C.K."/>
            <person name="Mayhew G.F."/>
            <person name="Gregor J."/>
            <person name="Davis N.W."/>
            <person name="Kirkpatrick H.A."/>
            <person name="Goeden M.A."/>
            <person name="Rose D.J."/>
            <person name="Mau B."/>
            <person name="Shao Y."/>
        </authorList>
    </citation>
    <scope>NUCLEOTIDE SEQUENCE [LARGE SCALE GENOMIC DNA]</scope>
    <source>
        <strain>K12 / MG1655 / ATCC 47076</strain>
    </source>
</reference>
<reference key="4">
    <citation type="journal article" date="2006" name="Mol. Syst. Biol.">
        <title>Highly accurate genome sequences of Escherichia coli K-12 strains MG1655 and W3110.</title>
        <authorList>
            <person name="Hayashi K."/>
            <person name="Morooka N."/>
            <person name="Yamamoto Y."/>
            <person name="Fujita K."/>
            <person name="Isono K."/>
            <person name="Choi S."/>
            <person name="Ohtsubo E."/>
            <person name="Baba T."/>
            <person name="Wanner B.L."/>
            <person name="Mori H."/>
            <person name="Horiuchi T."/>
        </authorList>
    </citation>
    <scope>NUCLEOTIDE SEQUENCE [LARGE SCALE GENOMIC DNA]</scope>
    <source>
        <strain>K12 / W3110 / ATCC 27325 / DSM 5911</strain>
    </source>
</reference>
<reference key="5">
    <citation type="journal article" date="1988" name="J. Mol. Biol.">
        <title>The cpx proteins of Escherichia coli K12. Structure of the cpxA polypeptide as an inner membrane component.</title>
        <authorList>
            <person name="Weber R.F."/>
            <person name="Silverman P.M."/>
        </authorList>
    </citation>
    <scope>NUCLEOTIDE SEQUENCE [GENOMIC DNA] OF 128-232</scope>
    <source>
        <strain>K12</strain>
    </source>
</reference>
<reference key="6">
    <citation type="journal article" date="1995" name="Genes Dev.">
        <title>The Cpx two-component signal transduction pathway of Escherichia coli regulates transcription of the gene specifying the stress-inducible periplasmic protease, DegP.</title>
        <authorList>
            <person name="Danese P.N."/>
            <person name="Snyder W.B."/>
            <person name="Cosma C.L."/>
            <person name="Davis L.J."/>
            <person name="Silhavy T.J."/>
        </authorList>
    </citation>
    <scope>FUNCTION AS A TRANSCRIPTIONAL ACTIVATOR</scope>
    <scope>ACTIVITY REGULATION</scope>
    <scope>PHOSPHORYLATION BY CPXA</scope>
    <scope>DISRUPTION PHENOTYPE</scope>
    <source>
        <strain>K12 / MC4100</strain>
    </source>
</reference>
<reference key="7">
    <citation type="journal article" date="1997" name="EMBO J.">
        <title>The chaperone-assisted membrane release and folding pathway is sensed by two signal transduction systems.</title>
        <authorList>
            <person name="Jones C.H."/>
            <person name="Danese P.N."/>
            <person name="Pinkner J.S."/>
            <person name="Silhavy T.J."/>
            <person name="Hultgren S.J."/>
        </authorList>
    </citation>
    <scope>ACTIVITY REGULATION</scope>
</reference>
<reference key="8">
    <citation type="journal article" date="1997" name="J. Bacteriol.">
        <title>Transduction of envelope stress in Escherichia coli by the Cpx two-component system.</title>
        <authorList>
            <person name="Raivio T.L."/>
            <person name="Silhavy T.J."/>
        </authorList>
    </citation>
    <scope>FUNCTION</scope>
    <scope>PHOSPHORYLATION BY CPXA</scope>
    <scope>DNA-BINDING</scope>
    <source>
        <strain>K12 / MC4100</strain>
    </source>
</reference>
<reference key="9">
    <citation type="journal article" date="1998" name="J. Bacteriol.">
        <title>CpxP, a stress-combative member of the Cpx regulon.</title>
        <authorList>
            <person name="Danese P.N."/>
            <person name="Silhavy T.J."/>
        </authorList>
    </citation>
    <scope>FUNCTION</scope>
    <scope>ACTIVITY REGULATION</scope>
    <scope>DISRUPTION PHENOTYPE</scope>
    <source>
        <strain>K12 / MC4100</strain>
    </source>
</reference>
<reference key="10">
    <citation type="journal article" date="2000" name="Mol. Microbiol.">
        <title>Tethering of CpxP to the inner membrane prevents spheroplast induction of the cpx envelope stress response.</title>
        <authorList>
            <person name="Raivio T.L."/>
            <person name="Laird M.W."/>
            <person name="Joly J.C."/>
            <person name="Silhavy T.J."/>
        </authorList>
    </citation>
    <scope>ACTIVITY REGULATION</scope>
    <scope>DISRUPTION PHENOTYPE</scope>
    <source>
        <strain>K12 / MC4100</strain>
    </source>
</reference>
<reference key="11">
    <citation type="journal article" date="2002" name="Proc. Natl. Acad. Sci. U.S.A.">
        <title>Surface sensing and adhesion of Escherichia coli controlled by the Cpx-signaling pathway.</title>
        <authorList>
            <person name="Otto K."/>
            <person name="Silhavy T.J."/>
        </authorList>
    </citation>
    <scope>FUNCTION IN BIOFILM FORMATION</scope>
    <scope>INDUCTION BY ADHESION</scope>
    <scope>DISRUPTION PHENOTYPE</scope>
    <source>
        <strain>K12 / MC4100 / ATCC 35695 / DSM 6574</strain>
    </source>
</reference>
<reference key="12">
    <citation type="journal article" date="2005" name="J. Bacteriol.">
        <title>Cpx signal transduction is influenced by a conserved N-terminal domain in the novel inhibitor CpxP and the periplasmic protease DegP.</title>
        <authorList>
            <person name="Buelow D.R."/>
            <person name="Raivio T.L."/>
        </authorList>
    </citation>
    <scope>FUNCTION</scope>
    <scope>ACTIVITY REGULATION</scope>
    <source>
        <strain>K12 / MC4100</strain>
    </source>
</reference>
<reference key="13">
    <citation type="journal article" date="2007" name="J. Biol. Chem.">
        <title>Purification, reconstitution, and characterization of the CpxRAP envelope stress system of Escherichia coli.</title>
        <authorList>
            <person name="Fleischer R."/>
            <person name="Heermann R."/>
            <person name="Jung K."/>
            <person name="Hunke S."/>
        </authorList>
    </citation>
    <scope>ACTIVITY REGULATION</scope>
    <scope>PHOSPHORYLATION BY CPXA</scope>
</reference>
<reference key="14">
    <citation type="journal article" date="2013" name="Cell Rep.">
        <title>YihE kinase is a central regulator of programmed cell death in bacteria.</title>
        <authorList>
            <person name="Dorsey-Oresto A."/>
            <person name="Lu T."/>
            <person name="Mosel M."/>
            <person name="Wang X."/>
            <person name="Salz T."/>
            <person name="Drlica K."/>
            <person name="Zhao X."/>
        </authorList>
    </citation>
    <scope>FUNCTION</scope>
    <scope>DISRUPTION PHENOTYPE</scope>
    <source>
        <strain>K12 / MG1655 / ATCC 47076</strain>
    </source>
</reference>
<reference key="15">
    <citation type="journal article" date="2014" name="PLoS ONE">
        <title>Dynamic interaction between the CpxA sensor kinase and the periplasmic accessory protein CpxP mediates signal recognition in E. coli.</title>
        <authorList>
            <person name="Tschauner K."/>
            <person name="Hoernschemeyer P."/>
            <person name="Mueller V.S."/>
            <person name="Hunke S."/>
        </authorList>
    </citation>
    <scope>ACTIVITY REGULATION</scope>
    <scope>INTERACTION WITH CPXA</scope>
    <scope>SUBUNIT</scope>
    <source>
        <strain>K12 / MG1655 / ATCC 47076</strain>
    </source>
</reference>
<reference key="16">
    <citation type="submission" date="2015-03" db="PDB data bank">
        <title>Structure of the response regulator CpxR.</title>
        <authorList>
            <person name="Mechaly A.E."/>
            <person name="Alzari P.M.A."/>
        </authorList>
    </citation>
    <scope>X-RAY CRYSTALLOGRAPHY (1.15 ANGSTROMS) OF 131-231</scope>
</reference>
<organism>
    <name type="scientific">Escherichia coli (strain K12)</name>
    <dbReference type="NCBI Taxonomy" id="83333"/>
    <lineage>
        <taxon>Bacteria</taxon>
        <taxon>Pseudomonadati</taxon>
        <taxon>Pseudomonadota</taxon>
        <taxon>Gammaproteobacteria</taxon>
        <taxon>Enterobacterales</taxon>
        <taxon>Enterobacteriaceae</taxon>
        <taxon>Escherichia</taxon>
    </lineage>
</organism>
<proteinExistence type="evidence at protein level"/>
<sequence length="232" mass="26312">MNKILLVDDDRELTSLLKELLEMEGFNVIVAHDGEQALDLLDDSIDLLLLDVMMPKKNGIDTLKALRQTHQTPVIMLTARGSELDRVLGLELGADDYLPKPFNDRELVARIRAILRRSHWSEQQQNNDNGSPTLEVDALVLNPGRQEASFDGQTLELTGTEFTLLYLLAQHLGQVVSREHLSQEVLGKRLTPFDRAIDMHISNLRRKLPDRKDGHPWFKTLRGRGYLMVSAS</sequence>
<gene>
    <name type="primary">cpxR</name>
    <name type="synonym">yiiA</name>
    <name type="ordered locus">b3912</name>
    <name type="ordered locus">JW3883</name>
</gene>
<protein>
    <recommendedName>
        <fullName>Transcriptional regulatory protein CpxR</fullName>
    </recommendedName>
</protein>
<comment type="function">
    <text evidence="4 7 9 11">Response regulator member of the two-component regulatory system CpxA/CpxR which responds to envelope stress response by activating expression of downstream genes including cpxP, degP, dsbA and ppiA (PubMed:7883164, PubMed:9401031). Required for efficient binding of stationary phase cells to hydrophobic surfaces, part of the process of biofilm formation (PubMed:11830644). Induced upon cell surface binding, subsequently induces genes it controls (cpxP, dsbA and spy, degP is only partially induced) (PubMed:11830644). Binds and activates transcription from the degP promoter (PubMed:7883164); binding is enhanced by phosphorylation (PubMed:9401031). This system combats a variety of extracytoplasmic protein-mediated toxicities by increasing the transcription of the periplasmic protease, DegP in concert with sigma factor E (PubMed:7883164), as well as that of CpxP protein. Other downstream effectors may include SrkA (PubMed:23416055).</text>
</comment>
<comment type="activity regulation">
    <text evidence="3 5 9 10 12">The two-component system is activated by envelope stress such as overexpression of some (misfolded) periplasmic proteins (PubMed:7883164, PubMed:9351822). Activated by spheroplasting (which removes the periplasm) in an autoregulatory cpxA-cpxR-dependent fashion (PubMed:10972835). Cpx two-component system is activated at pH 8.0; in a degP deletion mutant activation is halved (PubMed:16166523, PubMed:9473036). The CpxA kinase activity is inhibited by periplasmic accessory protein CpxP; proteolysis of CpxP relieves inhibition (PubMed:16166523, PubMed:17259177, PubMed:25207645).</text>
</comment>
<comment type="subunit">
    <text evidence="8">Interacts with cognate sensor kinase CpxA.</text>
</comment>
<comment type="interaction">
    <interactant intactId="EBI-550918">
        <id>P0AE88</id>
    </interactant>
    <interactant intactId="EBI-9141330">
        <id>P0AE82</id>
        <label>cpxA</label>
    </interactant>
    <organismsDiffer>false</organismsDiffer>
    <experiments>3</experiments>
</comment>
<comment type="interaction">
    <interactant intactId="EBI-550918">
        <id>P0AE88</id>
    </interactant>
    <interactant intactId="EBI-553837">
        <id>P00861</id>
        <label>lysA</label>
    </interactant>
    <organismsDiffer>false</organismsDiffer>
    <experiments>4</experiments>
</comment>
<comment type="interaction">
    <interactant intactId="EBI-550918">
        <id>P0AE88</id>
    </interactant>
    <interactant intactId="EBI-555877">
        <id>P0AG86</id>
        <label>secB</label>
    </interactant>
    <organismsDiffer>false</organismsDiffer>
    <experiments>3</experiments>
</comment>
<comment type="subcellular location">
    <subcellularLocation>
        <location evidence="13">Cytoplasm</location>
    </subcellularLocation>
</comment>
<comment type="induction">
    <text evidence="4">Induced about 3-fold when stationary phase cells bind to hydrophobic surfaces; requires direct contact with hydrophobic surfaces for up-regulation of Cpx activity (PubMed:11830644).</text>
</comment>
<comment type="PTM">
    <text evidence="6 11 14">Phosphorylated by CpxA.</text>
</comment>
<comment type="disruption phenotype">
    <text evidence="3 4 7 9 12">Loss of the Cpx envelope stress response (PubMed:10972835). A double cpxR-cpxA mutant decreases transcription of degP (PubMed:7883164). Cells are less sensitive to killing by nalidixic acid; double cpxR-srkA disruption mutants are as sensitive to killing as single srkA mutants, suggesting the SrkA protein kinase is partially regulated by CpxR. Hypersensitive to alkaline pH (greater than pH 8.8) (PubMed:9473036). Decreased numbers of stationary phase cells bind to hydrophobic surfaces, cellular adhesion has altered dynamic properties; no induction of cpxR when cells bind to hydrophobic surfaces (PubMed:11830644).</text>
</comment>
<feature type="chain" id="PRO_0000081078" description="Transcriptional regulatory protein CpxR">
    <location>
        <begin position="1"/>
        <end position="232"/>
    </location>
</feature>
<feature type="domain" description="Response regulatory" evidence="1">
    <location>
        <begin position="3"/>
        <end position="115"/>
    </location>
</feature>
<feature type="DNA-binding region" description="OmpR/PhoB-type" evidence="2">
    <location>
        <begin position="131"/>
        <end position="230"/>
    </location>
</feature>
<feature type="modified residue" description="4-aspartylphosphate" evidence="1">
    <location>
        <position position="51"/>
    </location>
</feature>
<feature type="strand" evidence="15">
    <location>
        <begin position="3"/>
        <end position="7"/>
    </location>
</feature>
<feature type="helix" evidence="15">
    <location>
        <begin position="11"/>
        <end position="23"/>
    </location>
</feature>
<feature type="strand" evidence="15">
    <location>
        <begin position="27"/>
        <end position="33"/>
    </location>
</feature>
<feature type="helix" evidence="15">
    <location>
        <begin position="34"/>
        <end position="40"/>
    </location>
</feature>
<feature type="strand" evidence="15">
    <location>
        <begin position="47"/>
        <end position="50"/>
    </location>
</feature>
<feature type="strand" evidence="15">
    <location>
        <begin position="55"/>
        <end position="57"/>
    </location>
</feature>
<feature type="helix" evidence="15">
    <location>
        <begin position="59"/>
        <end position="66"/>
    </location>
</feature>
<feature type="turn" evidence="15">
    <location>
        <begin position="67"/>
        <end position="69"/>
    </location>
</feature>
<feature type="strand" evidence="15">
    <location>
        <begin position="74"/>
        <end position="79"/>
    </location>
</feature>
<feature type="helix" evidence="15">
    <location>
        <begin position="83"/>
        <end position="91"/>
    </location>
</feature>
<feature type="strand" evidence="15">
    <location>
        <begin position="95"/>
        <end position="101"/>
    </location>
</feature>
<feature type="helix" evidence="15">
    <location>
        <begin position="104"/>
        <end position="123"/>
    </location>
</feature>
<feature type="strand" evidence="16">
    <location>
        <begin position="134"/>
        <end position="136"/>
    </location>
</feature>
<feature type="strand" evidence="16">
    <location>
        <begin position="139"/>
        <end position="142"/>
    </location>
</feature>
<feature type="turn" evidence="16">
    <location>
        <begin position="143"/>
        <end position="146"/>
    </location>
</feature>
<feature type="strand" evidence="16">
    <location>
        <begin position="147"/>
        <end position="150"/>
    </location>
</feature>
<feature type="helix" evidence="16">
    <location>
        <begin position="159"/>
        <end position="170"/>
    </location>
</feature>
<feature type="turn" evidence="16">
    <location>
        <begin position="171"/>
        <end position="173"/>
    </location>
</feature>
<feature type="helix" evidence="16">
    <location>
        <begin position="178"/>
        <end position="186"/>
    </location>
</feature>
<feature type="helix" evidence="16">
    <location>
        <begin position="196"/>
        <end position="207"/>
    </location>
</feature>
<feature type="strand" evidence="16">
    <location>
        <begin position="217"/>
        <end position="221"/>
    </location>
</feature>
<feature type="turn" evidence="16">
    <location>
        <begin position="222"/>
        <end position="224"/>
    </location>
</feature>
<feature type="strand" evidence="16">
    <location>
        <begin position="225"/>
        <end position="228"/>
    </location>
</feature>
<dbReference type="EMBL" id="L14579">
    <property type="protein sequence ID" value="AAC36868.1"/>
    <property type="molecule type" value="Unassigned_DNA"/>
</dbReference>
<dbReference type="EMBL" id="L19201">
    <property type="protein sequence ID" value="AAB03045.1"/>
    <property type="molecule type" value="Genomic_DNA"/>
</dbReference>
<dbReference type="EMBL" id="U00096">
    <property type="protein sequence ID" value="AAC76894.1"/>
    <property type="molecule type" value="Genomic_DNA"/>
</dbReference>
<dbReference type="EMBL" id="AP009048">
    <property type="protein sequence ID" value="BAE77397.1"/>
    <property type="molecule type" value="Genomic_DNA"/>
</dbReference>
<dbReference type="EMBL" id="X13307">
    <property type="protein sequence ID" value="CAA31686.1"/>
    <property type="molecule type" value="Genomic_DNA"/>
</dbReference>
<dbReference type="EMBL" id="M36795">
    <property type="protein sequence ID" value="AAA23599.1"/>
    <property type="molecule type" value="Genomic_DNA"/>
</dbReference>
<dbReference type="PIR" id="C65197">
    <property type="entry name" value="C65197"/>
</dbReference>
<dbReference type="RefSeq" id="NP_418348.1">
    <property type="nucleotide sequence ID" value="NC_000913.3"/>
</dbReference>
<dbReference type="RefSeq" id="WP_001033722.1">
    <property type="nucleotide sequence ID" value="NZ_STEB01000017.1"/>
</dbReference>
<dbReference type="PDB" id="4UHJ">
    <property type="method" value="X-ray"/>
    <property type="resolution" value="1.90 A"/>
    <property type="chains" value="A/B/C=1-123"/>
</dbReference>
<dbReference type="PDB" id="4UHK">
    <property type="method" value="X-ray"/>
    <property type="resolution" value="2.60 A"/>
    <property type="chains" value="A/B/C=1-123"/>
</dbReference>
<dbReference type="PDB" id="4UHS">
    <property type="method" value="X-ray"/>
    <property type="resolution" value="5.00 A"/>
    <property type="chains" value="A/B/C=1-123"/>
</dbReference>
<dbReference type="PDB" id="4UHT">
    <property type="method" value="X-ray"/>
    <property type="resolution" value="1.15 A"/>
    <property type="chains" value="A/B=131-231"/>
</dbReference>
<dbReference type="PDBsum" id="4UHJ"/>
<dbReference type="PDBsum" id="4UHK"/>
<dbReference type="PDBsum" id="4UHS"/>
<dbReference type="PDBsum" id="4UHT"/>
<dbReference type="SMR" id="P0AE88"/>
<dbReference type="BioGRID" id="4262645">
    <property type="interactions" value="409"/>
</dbReference>
<dbReference type="BioGRID" id="852701">
    <property type="interactions" value="2"/>
</dbReference>
<dbReference type="DIP" id="DIP-47991N"/>
<dbReference type="FunCoup" id="P0AE88">
    <property type="interactions" value="299"/>
</dbReference>
<dbReference type="IntAct" id="P0AE88">
    <property type="interactions" value="11"/>
</dbReference>
<dbReference type="STRING" id="511145.b3912"/>
<dbReference type="jPOST" id="P0AE88"/>
<dbReference type="PaxDb" id="511145-b3912"/>
<dbReference type="EnsemblBacteria" id="AAC76894">
    <property type="protein sequence ID" value="AAC76894"/>
    <property type="gene ID" value="b3912"/>
</dbReference>
<dbReference type="GeneID" id="93778026"/>
<dbReference type="GeneID" id="948404"/>
<dbReference type="KEGG" id="ecj:JW3883"/>
<dbReference type="KEGG" id="eco:b3912"/>
<dbReference type="KEGG" id="ecoc:C3026_21155"/>
<dbReference type="PATRIC" id="fig|1411691.4.peg.2792"/>
<dbReference type="EchoBASE" id="EB0019"/>
<dbReference type="eggNOG" id="COG0745">
    <property type="taxonomic scope" value="Bacteria"/>
</dbReference>
<dbReference type="HOGENOM" id="CLU_000445_30_4_6"/>
<dbReference type="InParanoid" id="P0AE88"/>
<dbReference type="OMA" id="QLWGYPP"/>
<dbReference type="OrthoDB" id="9802426at2"/>
<dbReference type="PhylomeDB" id="P0AE88"/>
<dbReference type="BioCyc" id="EcoCyc:CPXR-MONOMER"/>
<dbReference type="BioCyc" id="MetaCyc:CPXR-MONOMER"/>
<dbReference type="EvolutionaryTrace" id="P0AE88"/>
<dbReference type="PHI-base" id="PHI:4523"/>
<dbReference type="PHI-base" id="PHI:8273"/>
<dbReference type="PHI-base" id="PHI:9363"/>
<dbReference type="PRO" id="PR:P0AE88"/>
<dbReference type="Proteomes" id="UP000000625">
    <property type="component" value="Chromosome"/>
</dbReference>
<dbReference type="GO" id="GO:0005829">
    <property type="term" value="C:cytosol"/>
    <property type="evidence" value="ECO:0000314"/>
    <property type="project" value="EcoCyc"/>
</dbReference>
<dbReference type="GO" id="GO:0032993">
    <property type="term" value="C:protein-DNA complex"/>
    <property type="evidence" value="ECO:0000318"/>
    <property type="project" value="GO_Central"/>
</dbReference>
<dbReference type="GO" id="GO:0003700">
    <property type="term" value="F:DNA-binding transcription factor activity"/>
    <property type="evidence" value="ECO:0000314"/>
    <property type="project" value="EcoCyc"/>
</dbReference>
<dbReference type="GO" id="GO:0000156">
    <property type="term" value="F:phosphorelay response regulator activity"/>
    <property type="evidence" value="ECO:0000314"/>
    <property type="project" value="CACAO"/>
</dbReference>
<dbReference type="GO" id="GO:0000976">
    <property type="term" value="F:transcription cis-regulatory region binding"/>
    <property type="evidence" value="ECO:0000318"/>
    <property type="project" value="GO_Central"/>
</dbReference>
<dbReference type="GO" id="GO:0007155">
    <property type="term" value="P:cell adhesion"/>
    <property type="evidence" value="ECO:0007669"/>
    <property type="project" value="UniProtKB-KW"/>
</dbReference>
<dbReference type="GO" id="GO:0045892">
    <property type="term" value="P:negative regulation of DNA-templated transcription"/>
    <property type="evidence" value="ECO:0000314"/>
    <property type="project" value="EcoCyc"/>
</dbReference>
<dbReference type="GO" id="GO:0045893">
    <property type="term" value="P:positive regulation of DNA-templated transcription"/>
    <property type="evidence" value="ECO:0000314"/>
    <property type="project" value="CACAO"/>
</dbReference>
<dbReference type="GO" id="GO:0010810">
    <property type="term" value="P:regulation of cell-substrate adhesion"/>
    <property type="evidence" value="ECO:0000315"/>
    <property type="project" value="UniProtKB"/>
</dbReference>
<dbReference type="GO" id="GO:0006355">
    <property type="term" value="P:regulation of DNA-templated transcription"/>
    <property type="evidence" value="ECO:0000318"/>
    <property type="project" value="GO_Central"/>
</dbReference>
<dbReference type="CDD" id="cd17623">
    <property type="entry name" value="REC_OmpR_CpxR"/>
    <property type="match status" value="1"/>
</dbReference>
<dbReference type="CDD" id="cd00383">
    <property type="entry name" value="trans_reg_C"/>
    <property type="match status" value="1"/>
</dbReference>
<dbReference type="FunFam" id="1.10.10.10:FF:000077">
    <property type="entry name" value="DNA-binding transcriptional regulator CpxR"/>
    <property type="match status" value="1"/>
</dbReference>
<dbReference type="FunFam" id="3.40.50.2300:FF:000032">
    <property type="entry name" value="DNA-binding transcriptional regulator CpxR"/>
    <property type="match status" value="1"/>
</dbReference>
<dbReference type="Gene3D" id="3.40.50.2300">
    <property type="match status" value="1"/>
</dbReference>
<dbReference type="Gene3D" id="6.10.250.690">
    <property type="match status" value="1"/>
</dbReference>
<dbReference type="Gene3D" id="1.10.10.10">
    <property type="entry name" value="Winged helix-like DNA-binding domain superfamily/Winged helix DNA-binding domain"/>
    <property type="match status" value="1"/>
</dbReference>
<dbReference type="InterPro" id="IPR011006">
    <property type="entry name" value="CheY-like_superfamily"/>
</dbReference>
<dbReference type="InterPro" id="IPR001867">
    <property type="entry name" value="OmpR/PhoB-type_DNA-bd"/>
</dbReference>
<dbReference type="InterPro" id="IPR001789">
    <property type="entry name" value="Sig_transdc_resp-reg_receiver"/>
</dbReference>
<dbReference type="InterPro" id="IPR039420">
    <property type="entry name" value="WalR-like"/>
</dbReference>
<dbReference type="InterPro" id="IPR036388">
    <property type="entry name" value="WH-like_DNA-bd_sf"/>
</dbReference>
<dbReference type="NCBIfam" id="NF008199">
    <property type="entry name" value="PRK10955.1"/>
    <property type="match status" value="1"/>
</dbReference>
<dbReference type="PANTHER" id="PTHR48111">
    <property type="entry name" value="REGULATOR OF RPOS"/>
    <property type="match status" value="1"/>
</dbReference>
<dbReference type="PANTHER" id="PTHR48111:SF39">
    <property type="entry name" value="TRANSCRIPTIONAL REGULATORY PROTEIN CPXR"/>
    <property type="match status" value="1"/>
</dbReference>
<dbReference type="Pfam" id="PF00072">
    <property type="entry name" value="Response_reg"/>
    <property type="match status" value="1"/>
</dbReference>
<dbReference type="Pfam" id="PF00486">
    <property type="entry name" value="Trans_reg_C"/>
    <property type="match status" value="1"/>
</dbReference>
<dbReference type="SMART" id="SM00448">
    <property type="entry name" value="REC"/>
    <property type="match status" value="1"/>
</dbReference>
<dbReference type="SMART" id="SM00862">
    <property type="entry name" value="Trans_reg_C"/>
    <property type="match status" value="1"/>
</dbReference>
<dbReference type="SUPFAM" id="SSF52172">
    <property type="entry name" value="CheY-like"/>
    <property type="match status" value="1"/>
</dbReference>
<dbReference type="PROSITE" id="PS51755">
    <property type="entry name" value="OMPR_PHOB"/>
    <property type="match status" value="1"/>
</dbReference>
<dbReference type="PROSITE" id="PS50110">
    <property type="entry name" value="RESPONSE_REGULATORY"/>
    <property type="match status" value="1"/>
</dbReference>
<keyword id="KW-0002">3D-structure</keyword>
<keyword id="KW-0010">Activator</keyword>
<keyword id="KW-0130">Cell adhesion</keyword>
<keyword id="KW-0963">Cytoplasm</keyword>
<keyword id="KW-0238">DNA-binding</keyword>
<keyword id="KW-0597">Phosphoprotein</keyword>
<keyword id="KW-1185">Reference proteome</keyword>
<keyword id="KW-0346">Stress response</keyword>
<keyword id="KW-0804">Transcription</keyword>
<keyword id="KW-0805">Transcription regulation</keyword>
<keyword id="KW-0902">Two-component regulatory system</keyword>